<sequence length="414" mass="46175">MKTSTKTFAIADTAANADYLTNTSEPLGETMTLNVGPSHPATHGVLRLVLELDGEEIISCDPVVGHLHRGMEKIGETIQYNQFVPYTDRFDYLAPLSNNIAYACAVEKLLGWELPPRGQALRVLALELSRFSSHILGVGVYGMDVGAMTVFLYCYEEREKIHNFYEQLTGARFTSSYTRIGGQTRDVPNEMLKEVLVFCDEAAKTLDETEALLLKNKIFIDRLQGVGVISREKALSWGITGANLRASGIKRDLRKLTPYLGYENYEFDVPVGEHGDCYDRFTVRIEEMRQSLRIIRQVIETMPDGPINMVDTKGTLPEKKKVLTDMESLIRQFMTTTMGVNAPAGQVYFAAENPKGELGFFLDSKGGGLPNRLRMRSPSFCNLSILPELMKGHLVSDVPAILGSFDFVMGECDR</sequence>
<name>NUOD_AKKM8</name>
<gene>
    <name evidence="1" type="primary">nuoD</name>
    <name type="ordered locus">Amuc_1614</name>
</gene>
<comment type="function">
    <text evidence="1">NDH-1 shuttles electrons from NADH, via FMN and iron-sulfur (Fe-S) centers, to quinones in the respiratory chain. The immediate electron acceptor for the enzyme in this species is believed to be ubiquinone. Couples the redox reaction to proton translocation (for every two electrons transferred, four hydrogen ions are translocated across the cytoplasmic membrane), and thus conserves the redox energy in a proton gradient.</text>
</comment>
<comment type="catalytic activity">
    <reaction evidence="1">
        <text>a quinone + NADH + 5 H(+)(in) = a quinol + NAD(+) + 4 H(+)(out)</text>
        <dbReference type="Rhea" id="RHEA:57888"/>
        <dbReference type="ChEBI" id="CHEBI:15378"/>
        <dbReference type="ChEBI" id="CHEBI:24646"/>
        <dbReference type="ChEBI" id="CHEBI:57540"/>
        <dbReference type="ChEBI" id="CHEBI:57945"/>
        <dbReference type="ChEBI" id="CHEBI:132124"/>
    </reaction>
</comment>
<comment type="subunit">
    <text evidence="1">NDH-1 is composed of 14 different subunits. Subunits NuoB, C, D, E, F, and G constitute the peripheral sector of the complex.</text>
</comment>
<comment type="subcellular location">
    <subcellularLocation>
        <location evidence="1">Cell inner membrane</location>
        <topology evidence="1">Peripheral membrane protein</topology>
        <orientation evidence="1">Cytoplasmic side</orientation>
    </subcellularLocation>
</comment>
<comment type="similarity">
    <text evidence="1">Belongs to the complex I 49 kDa subunit family.</text>
</comment>
<accession>B2ULZ0</accession>
<keyword id="KW-0997">Cell inner membrane</keyword>
<keyword id="KW-1003">Cell membrane</keyword>
<keyword id="KW-0472">Membrane</keyword>
<keyword id="KW-0520">NAD</keyword>
<keyword id="KW-0874">Quinone</keyword>
<keyword id="KW-1185">Reference proteome</keyword>
<keyword id="KW-1278">Translocase</keyword>
<keyword id="KW-0813">Transport</keyword>
<keyword id="KW-0830">Ubiquinone</keyword>
<protein>
    <recommendedName>
        <fullName evidence="1">NADH-quinone oxidoreductase subunit D</fullName>
        <ecNumber evidence="1">7.1.1.-</ecNumber>
    </recommendedName>
    <alternativeName>
        <fullName evidence="1">NADH dehydrogenase I subunit D</fullName>
    </alternativeName>
    <alternativeName>
        <fullName evidence="1">NDH-1 subunit D</fullName>
    </alternativeName>
</protein>
<evidence type="ECO:0000255" key="1">
    <source>
        <dbReference type="HAMAP-Rule" id="MF_01358"/>
    </source>
</evidence>
<proteinExistence type="inferred from homology"/>
<organism>
    <name type="scientific">Akkermansia muciniphila (strain ATCC BAA-835 / DSM 22959 / JCM 33894 / BCRC 81048 / CCUG 64013 / CIP 107961 / Muc)</name>
    <dbReference type="NCBI Taxonomy" id="349741"/>
    <lineage>
        <taxon>Bacteria</taxon>
        <taxon>Pseudomonadati</taxon>
        <taxon>Verrucomicrobiota</taxon>
        <taxon>Verrucomicrobiia</taxon>
        <taxon>Verrucomicrobiales</taxon>
        <taxon>Akkermansiaceae</taxon>
        <taxon>Akkermansia</taxon>
    </lineage>
</organism>
<reference key="1">
    <citation type="journal article" date="2011" name="PLoS ONE">
        <title>The genome of Akkermansia muciniphila, a dedicated intestinal mucin degrader, and its use in exploring intestinal metagenomes.</title>
        <authorList>
            <person name="van Passel M.W."/>
            <person name="Kant R."/>
            <person name="Zoetendal E.G."/>
            <person name="Plugge C.M."/>
            <person name="Derrien M."/>
            <person name="Malfatti S.A."/>
            <person name="Chain P.S."/>
            <person name="Woyke T."/>
            <person name="Palva A."/>
            <person name="de Vos W.M."/>
            <person name="Smidt H."/>
        </authorList>
    </citation>
    <scope>NUCLEOTIDE SEQUENCE [LARGE SCALE GENOMIC DNA]</scope>
    <source>
        <strain>ATCC BAA-835 / DSM 22959 / JCM 33894 / BCRC 81048 / CCUG 64013 / CIP 107961 / Muc</strain>
    </source>
</reference>
<feature type="chain" id="PRO_0000371813" description="NADH-quinone oxidoreductase subunit D">
    <location>
        <begin position="1"/>
        <end position="414"/>
    </location>
</feature>
<dbReference type="EC" id="7.1.1.-" evidence="1"/>
<dbReference type="EMBL" id="CP001071">
    <property type="protein sequence ID" value="ACD05434.1"/>
    <property type="molecule type" value="Genomic_DNA"/>
</dbReference>
<dbReference type="RefSeq" id="WP_012420649.1">
    <property type="nucleotide sequence ID" value="NZ_CP071807.1"/>
</dbReference>
<dbReference type="SMR" id="B2ULZ0"/>
<dbReference type="STRING" id="349741.Amuc_1614"/>
<dbReference type="PaxDb" id="349741-Amuc_1614"/>
<dbReference type="GeneID" id="60881203"/>
<dbReference type="KEGG" id="amu:Amuc_1614"/>
<dbReference type="eggNOG" id="COG0649">
    <property type="taxonomic scope" value="Bacteria"/>
</dbReference>
<dbReference type="HOGENOM" id="CLU_015134_1_2_0"/>
<dbReference type="OrthoDB" id="9801496at2"/>
<dbReference type="BioCyc" id="AMUC349741:G1GBX-1719-MONOMER"/>
<dbReference type="Proteomes" id="UP000001031">
    <property type="component" value="Chromosome"/>
</dbReference>
<dbReference type="GO" id="GO:0005886">
    <property type="term" value="C:plasma membrane"/>
    <property type="evidence" value="ECO:0007669"/>
    <property type="project" value="UniProtKB-SubCell"/>
</dbReference>
<dbReference type="GO" id="GO:0051287">
    <property type="term" value="F:NAD binding"/>
    <property type="evidence" value="ECO:0007669"/>
    <property type="project" value="InterPro"/>
</dbReference>
<dbReference type="GO" id="GO:0050136">
    <property type="term" value="F:NADH:ubiquinone reductase (non-electrogenic) activity"/>
    <property type="evidence" value="ECO:0007669"/>
    <property type="project" value="UniProtKB-UniRule"/>
</dbReference>
<dbReference type="GO" id="GO:0048038">
    <property type="term" value="F:quinone binding"/>
    <property type="evidence" value="ECO:0007669"/>
    <property type="project" value="UniProtKB-KW"/>
</dbReference>
<dbReference type="Gene3D" id="1.10.645.10">
    <property type="entry name" value="Cytochrome-c3 Hydrogenase, chain B"/>
    <property type="match status" value="1"/>
</dbReference>
<dbReference type="HAMAP" id="MF_01358">
    <property type="entry name" value="NDH1_NuoD"/>
    <property type="match status" value="1"/>
</dbReference>
<dbReference type="InterPro" id="IPR001135">
    <property type="entry name" value="NADH_Q_OxRdtase_suD"/>
</dbReference>
<dbReference type="InterPro" id="IPR022885">
    <property type="entry name" value="NDH1_su_D/H"/>
</dbReference>
<dbReference type="InterPro" id="IPR029014">
    <property type="entry name" value="NiFe-Hase_large"/>
</dbReference>
<dbReference type="NCBIfam" id="TIGR01962">
    <property type="entry name" value="NuoD"/>
    <property type="match status" value="1"/>
</dbReference>
<dbReference type="NCBIfam" id="NF004739">
    <property type="entry name" value="PRK06075.1"/>
    <property type="match status" value="1"/>
</dbReference>
<dbReference type="PANTHER" id="PTHR11993:SF10">
    <property type="entry name" value="NADH DEHYDROGENASE [UBIQUINONE] IRON-SULFUR PROTEIN 2, MITOCHONDRIAL"/>
    <property type="match status" value="1"/>
</dbReference>
<dbReference type="PANTHER" id="PTHR11993">
    <property type="entry name" value="NADH-UBIQUINONE OXIDOREDUCTASE 49 KDA SUBUNIT"/>
    <property type="match status" value="1"/>
</dbReference>
<dbReference type="Pfam" id="PF00346">
    <property type="entry name" value="Complex1_49kDa"/>
    <property type="match status" value="1"/>
</dbReference>
<dbReference type="SUPFAM" id="SSF56762">
    <property type="entry name" value="HydB/Nqo4-like"/>
    <property type="match status" value="1"/>
</dbReference>